<evidence type="ECO:0000255" key="1"/>
<evidence type="ECO:0000255" key="2">
    <source>
        <dbReference type="PROSITE-ProRule" id="PRU00042"/>
    </source>
</evidence>
<evidence type="ECO:0000256" key="3">
    <source>
        <dbReference type="SAM" id="MobiDB-lite"/>
    </source>
</evidence>
<evidence type="ECO:0000269" key="4">
    <source>
    </source>
</evidence>
<evidence type="ECO:0000269" key="5">
    <source>
    </source>
</evidence>
<evidence type="ECO:0000305" key="6"/>
<reference key="1">
    <citation type="submission" date="1997-10" db="EMBL/GenBank/DDBJ databases">
        <title>C2H2 zinc finger type domains in Arabidopsis thaliana.</title>
        <authorList>
            <person name="Jensen R.B."/>
            <person name="Skriver K."/>
            <person name="Jespersen H.M."/>
        </authorList>
    </citation>
    <scope>NUCLEOTIDE SEQUENCE [MRNA]</scope>
    <source>
        <strain>cv. Columbia</strain>
    </source>
</reference>
<reference key="2">
    <citation type="journal article" date="2000" name="Nature">
        <title>Sequence and analysis of chromosome 5 of the plant Arabidopsis thaliana.</title>
        <authorList>
            <person name="Tabata S."/>
            <person name="Kaneko T."/>
            <person name="Nakamura Y."/>
            <person name="Kotani H."/>
            <person name="Kato T."/>
            <person name="Asamizu E."/>
            <person name="Miyajima N."/>
            <person name="Sasamoto S."/>
            <person name="Kimura T."/>
            <person name="Hosouchi T."/>
            <person name="Kawashima K."/>
            <person name="Kohara M."/>
            <person name="Matsumoto M."/>
            <person name="Matsuno A."/>
            <person name="Muraki A."/>
            <person name="Nakayama S."/>
            <person name="Nakazaki N."/>
            <person name="Naruo K."/>
            <person name="Okumura S."/>
            <person name="Shinpo S."/>
            <person name="Takeuchi C."/>
            <person name="Wada T."/>
            <person name="Watanabe A."/>
            <person name="Yamada M."/>
            <person name="Yasuda M."/>
            <person name="Sato S."/>
            <person name="de la Bastide M."/>
            <person name="Huang E."/>
            <person name="Spiegel L."/>
            <person name="Gnoj L."/>
            <person name="O'Shaughnessy A."/>
            <person name="Preston R."/>
            <person name="Habermann K."/>
            <person name="Murray J."/>
            <person name="Johnson D."/>
            <person name="Rohlfing T."/>
            <person name="Nelson J."/>
            <person name="Stoneking T."/>
            <person name="Pepin K."/>
            <person name="Spieth J."/>
            <person name="Sekhon M."/>
            <person name="Armstrong J."/>
            <person name="Becker M."/>
            <person name="Belter E."/>
            <person name="Cordum H."/>
            <person name="Cordes M."/>
            <person name="Courtney L."/>
            <person name="Courtney W."/>
            <person name="Dante M."/>
            <person name="Du H."/>
            <person name="Edwards J."/>
            <person name="Fryman J."/>
            <person name="Haakensen B."/>
            <person name="Lamar E."/>
            <person name="Latreille P."/>
            <person name="Leonard S."/>
            <person name="Meyer R."/>
            <person name="Mulvaney E."/>
            <person name="Ozersky P."/>
            <person name="Riley A."/>
            <person name="Strowmatt C."/>
            <person name="Wagner-McPherson C."/>
            <person name="Wollam A."/>
            <person name="Yoakum M."/>
            <person name="Bell M."/>
            <person name="Dedhia N."/>
            <person name="Parnell L."/>
            <person name="Shah R."/>
            <person name="Rodriguez M."/>
            <person name="Hoon See L."/>
            <person name="Vil D."/>
            <person name="Baker J."/>
            <person name="Kirchoff K."/>
            <person name="Toth K."/>
            <person name="King L."/>
            <person name="Bahret A."/>
            <person name="Miller B."/>
            <person name="Marra M.A."/>
            <person name="Martienssen R."/>
            <person name="McCombie W.R."/>
            <person name="Wilson R.K."/>
            <person name="Murphy G."/>
            <person name="Bancroft I."/>
            <person name="Volckaert G."/>
            <person name="Wambutt R."/>
            <person name="Duesterhoeft A."/>
            <person name="Stiekema W."/>
            <person name="Pohl T."/>
            <person name="Entian K.-D."/>
            <person name="Terryn N."/>
            <person name="Hartley N."/>
            <person name="Bent E."/>
            <person name="Johnson S."/>
            <person name="Langham S.-A."/>
            <person name="McCullagh B."/>
            <person name="Robben J."/>
            <person name="Grymonprez B."/>
            <person name="Zimmermann W."/>
            <person name="Ramsperger U."/>
            <person name="Wedler H."/>
            <person name="Balke K."/>
            <person name="Wedler E."/>
            <person name="Peters S."/>
            <person name="van Staveren M."/>
            <person name="Dirkse W."/>
            <person name="Mooijman P."/>
            <person name="Klein Lankhorst R."/>
            <person name="Weitzenegger T."/>
            <person name="Bothe G."/>
            <person name="Rose M."/>
            <person name="Hauf J."/>
            <person name="Berneiser S."/>
            <person name="Hempel S."/>
            <person name="Feldpausch M."/>
            <person name="Lamberth S."/>
            <person name="Villarroel R."/>
            <person name="Gielen J."/>
            <person name="Ardiles W."/>
            <person name="Bents O."/>
            <person name="Lemcke K."/>
            <person name="Kolesov G."/>
            <person name="Mayer K.F.X."/>
            <person name="Rudd S."/>
            <person name="Schoof H."/>
            <person name="Schueller C."/>
            <person name="Zaccaria P."/>
            <person name="Mewes H.-W."/>
            <person name="Bevan M."/>
            <person name="Fransz P.F."/>
        </authorList>
    </citation>
    <scope>NUCLEOTIDE SEQUENCE [LARGE SCALE GENOMIC DNA]</scope>
    <source>
        <strain>cv. Columbia</strain>
    </source>
</reference>
<reference key="3">
    <citation type="journal article" date="2017" name="Plant J.">
        <title>Araport11: a complete reannotation of the Arabidopsis thaliana reference genome.</title>
        <authorList>
            <person name="Cheng C.Y."/>
            <person name="Krishnakumar V."/>
            <person name="Chan A.P."/>
            <person name="Thibaud-Nissen F."/>
            <person name="Schobel S."/>
            <person name="Town C.D."/>
        </authorList>
    </citation>
    <scope>GENOME REANNOTATION</scope>
    <source>
        <strain>cv. Columbia</strain>
    </source>
</reference>
<reference key="4">
    <citation type="journal article" date="2002" name="Science">
        <title>Functional annotation of a full-length Arabidopsis cDNA collection.</title>
        <authorList>
            <person name="Seki M."/>
            <person name="Narusaka M."/>
            <person name="Kamiya A."/>
            <person name="Ishida J."/>
            <person name="Satou M."/>
            <person name="Sakurai T."/>
            <person name="Nakajima M."/>
            <person name="Enju A."/>
            <person name="Akiyama K."/>
            <person name="Oono Y."/>
            <person name="Muramatsu M."/>
            <person name="Hayashizaki Y."/>
            <person name="Kawai J."/>
            <person name="Carninci P."/>
            <person name="Itoh M."/>
            <person name="Ishii Y."/>
            <person name="Arakawa T."/>
            <person name="Shibata K."/>
            <person name="Shinagawa A."/>
            <person name="Shinozaki K."/>
        </authorList>
    </citation>
    <scope>NUCLEOTIDE SEQUENCE [LARGE SCALE MRNA]</scope>
    <source>
        <strain>cv. Columbia</strain>
    </source>
</reference>
<reference key="5">
    <citation type="journal article" date="2005" name="Plant J.">
        <title>Roles of the CBF2 and ZAT12 transcription factors in configuring the low temperature transcriptome of Arabidopsis.</title>
        <authorList>
            <person name="Vogel J.T."/>
            <person name="Zarka D.G."/>
            <person name="Van Buskirk H.A."/>
            <person name="Fowler S.G."/>
            <person name="Thomashow M.F."/>
        </authorList>
    </citation>
    <scope>INDUCTION BY COLD</scope>
</reference>
<reference key="6">
    <citation type="journal article" date="2007" name="Plant Physiol.">
        <title>Phosphate homeostasis and root development in Arabidopsis are synchronized by the zinc finger transcription factor ZAT6.</title>
        <authorList>
            <person name="Devaiah B.N."/>
            <person name="Nagarajan V.K."/>
            <person name="Raghothama K.G."/>
        </authorList>
    </citation>
    <scope>FUNCTION</scope>
    <scope>SUBCELLULAR LOCATION</scope>
    <scope>INDUCTION</scope>
</reference>
<feature type="chain" id="PRO_0000409715" description="Zinc finger protein ZAT6">
    <location>
        <begin position="1"/>
        <end position="238"/>
    </location>
</feature>
<feature type="zinc finger region" description="C2H2-type 1" evidence="2">
    <location>
        <begin position="89"/>
        <end position="111"/>
    </location>
</feature>
<feature type="zinc finger region" description="C2H2-type 2" evidence="2">
    <location>
        <begin position="148"/>
        <end position="170"/>
    </location>
</feature>
<feature type="region of interest" description="Disordered" evidence="3">
    <location>
        <begin position="1"/>
        <end position="42"/>
    </location>
</feature>
<feature type="region of interest" description="Disordered" evidence="3">
    <location>
        <begin position="175"/>
        <end position="202"/>
    </location>
</feature>
<feature type="short sequence motif" description="Nuclear localization signal" evidence="1">
    <location>
        <begin position="30"/>
        <end position="38"/>
    </location>
</feature>
<feature type="compositionally biased region" description="Polar residues" evidence="3">
    <location>
        <begin position="1"/>
        <end position="15"/>
    </location>
</feature>
<feature type="compositionally biased region" description="Low complexity" evidence="3">
    <location>
        <begin position="180"/>
        <end position="193"/>
    </location>
</feature>
<feature type="sequence conflict" description="In Ref. 4; BAC43454." evidence="6" ref="4">
    <original>E</original>
    <variation>G</variation>
    <location>
        <position position="236"/>
    </location>
</feature>
<keyword id="KW-0479">Metal-binding</keyword>
<keyword id="KW-0539">Nucleus</keyword>
<keyword id="KW-1185">Reference proteome</keyword>
<keyword id="KW-0677">Repeat</keyword>
<keyword id="KW-0804">Transcription</keyword>
<keyword id="KW-0805">Transcription regulation</keyword>
<keyword id="KW-0862">Zinc</keyword>
<keyword id="KW-0863">Zinc-finger</keyword>
<protein>
    <recommendedName>
        <fullName>Zinc finger protein ZAT6</fullName>
    </recommendedName>
    <alternativeName>
        <fullName>COLD INDUCED ZINC FINGER PROTEIN 2</fullName>
    </alternativeName>
</protein>
<comment type="function">
    <text evidence="5">Probable transcription factor that regulates root development and phosphate (Pi) acquisition and homeostasis. Probably acts as a repressor of primary root growth and regulates Pi homeostasis through the control of root architecture.</text>
</comment>
<comment type="subcellular location">
    <subcellularLocation>
        <location evidence="5">Nucleus</location>
    </subcellularLocation>
</comment>
<comment type="induction">
    <text evidence="4 5">By cold treatment and during Pi starvation.</text>
</comment>
<comment type="miscellaneous">
    <text>Seeds silencing ZAT6 fail to germinate. Plants overexpressing ZAT6 have retarded growth with smaller primary roots and fewer leaves.</text>
</comment>
<proteinExistence type="evidence at transcript level"/>
<gene>
    <name type="primary">ZAT6</name>
    <name type="synonym">CZF2</name>
    <name type="ordered locus">At5g04340</name>
    <name type="ORF">T19N18.70</name>
</gene>
<dbReference type="EMBL" id="AF022658">
    <property type="protein sequence ID" value="AAB80922.1"/>
    <property type="molecule type" value="mRNA"/>
</dbReference>
<dbReference type="EMBL" id="CP002688">
    <property type="protein sequence ID" value="AED90729.1"/>
    <property type="molecule type" value="Genomic_DNA"/>
</dbReference>
<dbReference type="EMBL" id="AK118868">
    <property type="protein sequence ID" value="BAC43454.1"/>
    <property type="molecule type" value="mRNA"/>
</dbReference>
<dbReference type="RefSeq" id="NP_196054.1">
    <property type="nucleotide sequence ID" value="NM_120516.4"/>
</dbReference>
<dbReference type="BioGRID" id="15592">
    <property type="interactions" value="4"/>
</dbReference>
<dbReference type="FunCoup" id="O22533">
    <property type="interactions" value="17"/>
</dbReference>
<dbReference type="IntAct" id="O22533">
    <property type="interactions" value="1"/>
</dbReference>
<dbReference type="STRING" id="3702.O22533"/>
<dbReference type="GlyGen" id="O22533">
    <property type="glycosylation" value="1 site"/>
</dbReference>
<dbReference type="iPTMnet" id="O22533"/>
<dbReference type="PaxDb" id="3702-AT5G04340.1"/>
<dbReference type="ProteomicsDB" id="242952"/>
<dbReference type="EnsemblPlants" id="AT5G04340.1">
    <property type="protein sequence ID" value="AT5G04340.1"/>
    <property type="gene ID" value="AT5G04340"/>
</dbReference>
<dbReference type="GeneID" id="830313"/>
<dbReference type="Gramene" id="AT5G04340.1">
    <property type="protein sequence ID" value="AT5G04340.1"/>
    <property type="gene ID" value="AT5G04340"/>
</dbReference>
<dbReference type="KEGG" id="ath:AT5G04340"/>
<dbReference type="Araport" id="AT5G04340"/>
<dbReference type="TAIR" id="AT5G04340">
    <property type="gene designation" value="ZAT6"/>
</dbReference>
<dbReference type="eggNOG" id="KOG1721">
    <property type="taxonomic scope" value="Eukaryota"/>
</dbReference>
<dbReference type="HOGENOM" id="CLU_059471_1_2_1"/>
<dbReference type="InParanoid" id="O22533"/>
<dbReference type="OMA" id="SVKSHVC"/>
<dbReference type="PhylomeDB" id="O22533"/>
<dbReference type="PRO" id="PR:O22533"/>
<dbReference type="Proteomes" id="UP000006548">
    <property type="component" value="Chromosome 5"/>
</dbReference>
<dbReference type="ExpressionAtlas" id="O22533">
    <property type="expression patterns" value="baseline and differential"/>
</dbReference>
<dbReference type="GO" id="GO:0005634">
    <property type="term" value="C:nucleus"/>
    <property type="evidence" value="ECO:0000314"/>
    <property type="project" value="UniProtKB"/>
</dbReference>
<dbReference type="GO" id="GO:0003700">
    <property type="term" value="F:DNA-binding transcription factor activity"/>
    <property type="evidence" value="ECO:0000314"/>
    <property type="project" value="TAIR"/>
</dbReference>
<dbReference type="GO" id="GO:0000978">
    <property type="term" value="F:RNA polymerase II cis-regulatory region sequence-specific DNA binding"/>
    <property type="evidence" value="ECO:0000314"/>
    <property type="project" value="TAIR"/>
</dbReference>
<dbReference type="GO" id="GO:0000976">
    <property type="term" value="F:transcription cis-regulatory region binding"/>
    <property type="evidence" value="ECO:0000353"/>
    <property type="project" value="TAIR"/>
</dbReference>
<dbReference type="GO" id="GO:0008270">
    <property type="term" value="F:zinc ion binding"/>
    <property type="evidence" value="ECO:0007669"/>
    <property type="project" value="UniProtKB-KW"/>
</dbReference>
<dbReference type="GO" id="GO:0071456">
    <property type="term" value="P:cellular response to hypoxia"/>
    <property type="evidence" value="ECO:0007007"/>
    <property type="project" value="TAIR"/>
</dbReference>
<dbReference type="GO" id="GO:0055062">
    <property type="term" value="P:phosphate ion homeostasis"/>
    <property type="evidence" value="ECO:0000316"/>
    <property type="project" value="UniProtKB"/>
</dbReference>
<dbReference type="GO" id="GO:2000280">
    <property type="term" value="P:regulation of root development"/>
    <property type="evidence" value="ECO:0000316"/>
    <property type="project" value="UniProtKB"/>
</dbReference>
<dbReference type="FunFam" id="3.30.160.60:FF:003692">
    <property type="entry name" value="Zinc finger protein ZAT10"/>
    <property type="match status" value="1"/>
</dbReference>
<dbReference type="Gene3D" id="3.30.160.60">
    <property type="entry name" value="Classic Zinc Finger"/>
    <property type="match status" value="1"/>
</dbReference>
<dbReference type="InterPro" id="IPR044653">
    <property type="entry name" value="AZF1/2/3-like"/>
</dbReference>
<dbReference type="InterPro" id="IPR036236">
    <property type="entry name" value="Znf_C2H2_sf"/>
</dbReference>
<dbReference type="InterPro" id="IPR013087">
    <property type="entry name" value="Znf_C2H2_type"/>
</dbReference>
<dbReference type="PANTHER" id="PTHR45988">
    <property type="entry name" value="C2H2 TYPE ZINC FINGER TRANSCRIPTION FACTOR FAMILY-RELATED"/>
    <property type="match status" value="1"/>
</dbReference>
<dbReference type="PANTHER" id="PTHR45988:SF92">
    <property type="entry name" value="C2H2 TYPE ZINC FINGER TRANSCRIPTION FACTOR FAMILY-RELATED"/>
    <property type="match status" value="1"/>
</dbReference>
<dbReference type="Pfam" id="PF13912">
    <property type="entry name" value="zf-C2H2_6"/>
    <property type="match status" value="2"/>
</dbReference>
<dbReference type="SMART" id="SM00355">
    <property type="entry name" value="ZnF_C2H2"/>
    <property type="match status" value="2"/>
</dbReference>
<dbReference type="SUPFAM" id="SSF57667">
    <property type="entry name" value="beta-beta-alpha zinc fingers"/>
    <property type="match status" value="1"/>
</dbReference>
<dbReference type="PROSITE" id="PS00028">
    <property type="entry name" value="ZINC_FINGER_C2H2_1"/>
    <property type="match status" value="2"/>
</dbReference>
<dbReference type="PROSITE" id="PS50157">
    <property type="entry name" value="ZINC_FINGER_C2H2_2"/>
    <property type="match status" value="2"/>
</dbReference>
<accession>O22533</accession>
<accession>Q8GWG1</accession>
<organism>
    <name type="scientific">Arabidopsis thaliana</name>
    <name type="common">Mouse-ear cress</name>
    <dbReference type="NCBI Taxonomy" id="3702"/>
    <lineage>
        <taxon>Eukaryota</taxon>
        <taxon>Viridiplantae</taxon>
        <taxon>Streptophyta</taxon>
        <taxon>Embryophyta</taxon>
        <taxon>Tracheophyta</taxon>
        <taxon>Spermatophyta</taxon>
        <taxon>Magnoliopsida</taxon>
        <taxon>eudicotyledons</taxon>
        <taxon>Gunneridae</taxon>
        <taxon>Pentapetalae</taxon>
        <taxon>rosids</taxon>
        <taxon>malvids</taxon>
        <taxon>Brassicales</taxon>
        <taxon>Brassicaceae</taxon>
        <taxon>Camelineae</taxon>
        <taxon>Arabidopsis</taxon>
    </lineage>
</organism>
<name>ZAT6_ARATH</name>
<sequence>MALETLTSPRLSSPMPTLFQDSALGFHGSKGKRSKRSRSEFDRQSLTEDEYIALCLMLLARDGDRNRDLDLPSSSSSPPLLPPLPTPIYKCSVCDKAFSSYQALGGHKASHRKSFSLTQSAGGDELSTSSAITTSGISGGGGGSVKSHVCSICHKSFATGQALGGHKRCHYEGKNGGGVSSSVSNSEDVGSTSHVSSGHRGFDLNIPPIPEFSMVNGDEEVMSPMPAKKLRFDFPEKP</sequence>